<proteinExistence type="inferred from homology"/>
<reference key="1">
    <citation type="journal article" date="2008" name="J. Bacteriol.">
        <title>Complete genome sequence of uropathogenic Proteus mirabilis, a master of both adherence and motility.</title>
        <authorList>
            <person name="Pearson M.M."/>
            <person name="Sebaihia M."/>
            <person name="Churcher C."/>
            <person name="Quail M.A."/>
            <person name="Seshasayee A.S."/>
            <person name="Luscombe N.M."/>
            <person name="Abdellah Z."/>
            <person name="Arrosmith C."/>
            <person name="Atkin B."/>
            <person name="Chillingworth T."/>
            <person name="Hauser H."/>
            <person name="Jagels K."/>
            <person name="Moule S."/>
            <person name="Mungall K."/>
            <person name="Norbertczak H."/>
            <person name="Rabbinowitsch E."/>
            <person name="Walker D."/>
            <person name="Whithead S."/>
            <person name="Thomson N.R."/>
            <person name="Rather P.N."/>
            <person name="Parkhill J."/>
            <person name="Mobley H.L.T."/>
        </authorList>
    </citation>
    <scope>NUCLEOTIDE SEQUENCE [LARGE SCALE GENOMIC DNA]</scope>
    <source>
        <strain>HI4320</strain>
    </source>
</reference>
<sequence>MTDKRKDSSGKLLYCSFCGKSQHEVKKLIAGPSVYICDECVDLCVDIIREEIKELAPHHERSELPTPHEIRKHLDDYVIGQELAKKVLAVAVYNHYKRLRNGDKADGVELGKSNILLIGPTGSGKTLLAETLARYLDVPFTMADATTLTEAGYVGEDVENIIQKLLQKCDYDVQKAQRGIVYIDEIDKITRKSENPSITRDVSGEGVQQALLKLVEGTVASVPPQGGRKHPQQEFLQVDTSKILFICGGAFAGLDKVVAQRLNTHSGIGFGAEVKSQNEKASEGELLAQVEPEDLIKFGLIPEFIGRLPVVATLGELNEDALIQILQEPKNALTKQYQALFKLEGVDLEFRKDALTAIAKKAMSRKTGARGLRSIVEAALLDTMYDLPSFENAEKVVIDENVINGKSEPLIIYSQPENQASGE</sequence>
<comment type="function">
    <text evidence="1">ATP-dependent specificity component of the Clp protease. It directs the protease to specific substrates. Can perform chaperone functions in the absence of ClpP.</text>
</comment>
<comment type="subunit">
    <text evidence="1">Component of the ClpX-ClpP complex. Forms a hexameric ring that, in the presence of ATP, binds to fourteen ClpP subunits assembled into a disk-like structure with a central cavity, resembling the structure of eukaryotic proteasomes.</text>
</comment>
<comment type="similarity">
    <text evidence="1">Belongs to the ClpX chaperone family.</text>
</comment>
<keyword id="KW-0067">ATP-binding</keyword>
<keyword id="KW-0143">Chaperone</keyword>
<keyword id="KW-0479">Metal-binding</keyword>
<keyword id="KW-0547">Nucleotide-binding</keyword>
<keyword id="KW-1185">Reference proteome</keyword>
<keyword id="KW-0862">Zinc</keyword>
<protein>
    <recommendedName>
        <fullName evidence="1">ATP-dependent Clp protease ATP-binding subunit ClpX</fullName>
    </recommendedName>
</protein>
<name>CLPX_PROMH</name>
<organism>
    <name type="scientific">Proteus mirabilis (strain HI4320)</name>
    <dbReference type="NCBI Taxonomy" id="529507"/>
    <lineage>
        <taxon>Bacteria</taxon>
        <taxon>Pseudomonadati</taxon>
        <taxon>Pseudomonadota</taxon>
        <taxon>Gammaproteobacteria</taxon>
        <taxon>Enterobacterales</taxon>
        <taxon>Morganellaceae</taxon>
        <taxon>Proteus</taxon>
    </lineage>
</organism>
<feature type="chain" id="PRO_1000097984" description="ATP-dependent Clp protease ATP-binding subunit ClpX">
    <location>
        <begin position="1"/>
        <end position="423"/>
    </location>
</feature>
<feature type="domain" description="ClpX-type ZB" evidence="2">
    <location>
        <begin position="2"/>
        <end position="56"/>
    </location>
</feature>
<feature type="binding site" evidence="2">
    <location>
        <position position="15"/>
    </location>
    <ligand>
        <name>Zn(2+)</name>
        <dbReference type="ChEBI" id="CHEBI:29105"/>
    </ligand>
</feature>
<feature type="binding site" evidence="2">
    <location>
        <position position="18"/>
    </location>
    <ligand>
        <name>Zn(2+)</name>
        <dbReference type="ChEBI" id="CHEBI:29105"/>
    </ligand>
</feature>
<feature type="binding site" evidence="2">
    <location>
        <position position="37"/>
    </location>
    <ligand>
        <name>Zn(2+)</name>
        <dbReference type="ChEBI" id="CHEBI:29105"/>
    </ligand>
</feature>
<feature type="binding site" evidence="2">
    <location>
        <position position="40"/>
    </location>
    <ligand>
        <name>Zn(2+)</name>
        <dbReference type="ChEBI" id="CHEBI:29105"/>
    </ligand>
</feature>
<feature type="binding site" evidence="1">
    <location>
        <begin position="120"/>
        <end position="127"/>
    </location>
    <ligand>
        <name>ATP</name>
        <dbReference type="ChEBI" id="CHEBI:30616"/>
    </ligand>
</feature>
<dbReference type="EMBL" id="AM942759">
    <property type="protein sequence ID" value="CAR40395.1"/>
    <property type="molecule type" value="Genomic_DNA"/>
</dbReference>
<dbReference type="RefSeq" id="WP_004245087.1">
    <property type="nucleotide sequence ID" value="NC_010554.1"/>
</dbReference>
<dbReference type="SMR" id="B4EU54"/>
<dbReference type="EnsemblBacteria" id="CAR40395">
    <property type="protein sequence ID" value="CAR40395"/>
    <property type="gene ID" value="PMI0116"/>
</dbReference>
<dbReference type="GeneID" id="6802819"/>
<dbReference type="KEGG" id="pmr:PMI0116"/>
<dbReference type="eggNOG" id="COG1219">
    <property type="taxonomic scope" value="Bacteria"/>
</dbReference>
<dbReference type="HOGENOM" id="CLU_014218_8_2_6"/>
<dbReference type="Proteomes" id="UP000008319">
    <property type="component" value="Chromosome"/>
</dbReference>
<dbReference type="GO" id="GO:0009376">
    <property type="term" value="C:HslUV protease complex"/>
    <property type="evidence" value="ECO:0007669"/>
    <property type="project" value="TreeGrafter"/>
</dbReference>
<dbReference type="GO" id="GO:0005524">
    <property type="term" value="F:ATP binding"/>
    <property type="evidence" value="ECO:0007669"/>
    <property type="project" value="UniProtKB-UniRule"/>
</dbReference>
<dbReference type="GO" id="GO:0016887">
    <property type="term" value="F:ATP hydrolysis activity"/>
    <property type="evidence" value="ECO:0007669"/>
    <property type="project" value="InterPro"/>
</dbReference>
<dbReference type="GO" id="GO:0140662">
    <property type="term" value="F:ATP-dependent protein folding chaperone"/>
    <property type="evidence" value="ECO:0007669"/>
    <property type="project" value="InterPro"/>
</dbReference>
<dbReference type="GO" id="GO:0046983">
    <property type="term" value="F:protein dimerization activity"/>
    <property type="evidence" value="ECO:0007669"/>
    <property type="project" value="InterPro"/>
</dbReference>
<dbReference type="GO" id="GO:0051082">
    <property type="term" value="F:unfolded protein binding"/>
    <property type="evidence" value="ECO:0007669"/>
    <property type="project" value="UniProtKB-UniRule"/>
</dbReference>
<dbReference type="GO" id="GO:0008270">
    <property type="term" value="F:zinc ion binding"/>
    <property type="evidence" value="ECO:0007669"/>
    <property type="project" value="InterPro"/>
</dbReference>
<dbReference type="GO" id="GO:0051301">
    <property type="term" value="P:cell division"/>
    <property type="evidence" value="ECO:0007669"/>
    <property type="project" value="TreeGrafter"/>
</dbReference>
<dbReference type="GO" id="GO:0051603">
    <property type="term" value="P:proteolysis involved in protein catabolic process"/>
    <property type="evidence" value="ECO:0007669"/>
    <property type="project" value="TreeGrafter"/>
</dbReference>
<dbReference type="CDD" id="cd19497">
    <property type="entry name" value="RecA-like_ClpX"/>
    <property type="match status" value="1"/>
</dbReference>
<dbReference type="FunFam" id="1.10.8.60:FF:000002">
    <property type="entry name" value="ATP-dependent Clp protease ATP-binding subunit ClpX"/>
    <property type="match status" value="1"/>
</dbReference>
<dbReference type="FunFam" id="3.40.50.300:FF:000005">
    <property type="entry name" value="ATP-dependent Clp protease ATP-binding subunit ClpX"/>
    <property type="match status" value="1"/>
</dbReference>
<dbReference type="Gene3D" id="1.10.8.60">
    <property type="match status" value="1"/>
</dbReference>
<dbReference type="Gene3D" id="6.20.220.10">
    <property type="entry name" value="ClpX chaperone, C4-type zinc finger domain"/>
    <property type="match status" value="1"/>
</dbReference>
<dbReference type="Gene3D" id="3.40.50.300">
    <property type="entry name" value="P-loop containing nucleotide triphosphate hydrolases"/>
    <property type="match status" value="1"/>
</dbReference>
<dbReference type="HAMAP" id="MF_00175">
    <property type="entry name" value="ClpX"/>
    <property type="match status" value="1"/>
</dbReference>
<dbReference type="InterPro" id="IPR003593">
    <property type="entry name" value="AAA+_ATPase"/>
</dbReference>
<dbReference type="InterPro" id="IPR050052">
    <property type="entry name" value="ATP-dep_Clp_protease_ClpX"/>
</dbReference>
<dbReference type="InterPro" id="IPR003959">
    <property type="entry name" value="ATPase_AAA_core"/>
</dbReference>
<dbReference type="InterPro" id="IPR019489">
    <property type="entry name" value="Clp_ATPase_C"/>
</dbReference>
<dbReference type="InterPro" id="IPR004487">
    <property type="entry name" value="Clp_protease_ATP-bd_su_ClpX"/>
</dbReference>
<dbReference type="InterPro" id="IPR046425">
    <property type="entry name" value="ClpX_bact"/>
</dbReference>
<dbReference type="InterPro" id="IPR027417">
    <property type="entry name" value="P-loop_NTPase"/>
</dbReference>
<dbReference type="InterPro" id="IPR010603">
    <property type="entry name" value="Znf_CppX_C4"/>
</dbReference>
<dbReference type="InterPro" id="IPR038366">
    <property type="entry name" value="Znf_CppX_C4_sf"/>
</dbReference>
<dbReference type="NCBIfam" id="TIGR00382">
    <property type="entry name" value="clpX"/>
    <property type="match status" value="1"/>
</dbReference>
<dbReference type="NCBIfam" id="NF003745">
    <property type="entry name" value="PRK05342.1"/>
    <property type="match status" value="1"/>
</dbReference>
<dbReference type="PANTHER" id="PTHR48102:SF7">
    <property type="entry name" value="ATP-DEPENDENT CLP PROTEASE ATP-BINDING SUBUNIT CLPX-LIKE, MITOCHONDRIAL"/>
    <property type="match status" value="1"/>
</dbReference>
<dbReference type="PANTHER" id="PTHR48102">
    <property type="entry name" value="ATP-DEPENDENT CLP PROTEASE ATP-BINDING SUBUNIT CLPX-LIKE, MITOCHONDRIAL-RELATED"/>
    <property type="match status" value="1"/>
</dbReference>
<dbReference type="Pfam" id="PF07724">
    <property type="entry name" value="AAA_2"/>
    <property type="match status" value="1"/>
</dbReference>
<dbReference type="Pfam" id="PF10431">
    <property type="entry name" value="ClpB_D2-small"/>
    <property type="match status" value="1"/>
</dbReference>
<dbReference type="Pfam" id="PF06689">
    <property type="entry name" value="zf-C4_ClpX"/>
    <property type="match status" value="1"/>
</dbReference>
<dbReference type="SMART" id="SM00382">
    <property type="entry name" value="AAA"/>
    <property type="match status" value="1"/>
</dbReference>
<dbReference type="SMART" id="SM01086">
    <property type="entry name" value="ClpB_D2-small"/>
    <property type="match status" value="1"/>
</dbReference>
<dbReference type="SMART" id="SM00994">
    <property type="entry name" value="zf-C4_ClpX"/>
    <property type="match status" value="1"/>
</dbReference>
<dbReference type="SUPFAM" id="SSF57716">
    <property type="entry name" value="Glucocorticoid receptor-like (DNA-binding domain)"/>
    <property type="match status" value="1"/>
</dbReference>
<dbReference type="SUPFAM" id="SSF52540">
    <property type="entry name" value="P-loop containing nucleoside triphosphate hydrolases"/>
    <property type="match status" value="1"/>
</dbReference>
<dbReference type="PROSITE" id="PS51902">
    <property type="entry name" value="CLPX_ZB"/>
    <property type="match status" value="1"/>
</dbReference>
<accession>B4EU54</accession>
<gene>
    <name evidence="1" type="primary">clpX</name>
    <name type="ordered locus">PMI0116</name>
</gene>
<evidence type="ECO:0000255" key="1">
    <source>
        <dbReference type="HAMAP-Rule" id="MF_00175"/>
    </source>
</evidence>
<evidence type="ECO:0000255" key="2">
    <source>
        <dbReference type="PROSITE-ProRule" id="PRU01250"/>
    </source>
</evidence>